<protein>
    <recommendedName>
        <fullName evidence="1">Bifunctional purine biosynthesis protein PurH</fullName>
    </recommendedName>
    <domain>
        <recommendedName>
            <fullName evidence="1">Phosphoribosylaminoimidazolecarboxamide formyltransferase</fullName>
            <ecNumber evidence="1">2.1.2.3</ecNumber>
        </recommendedName>
        <alternativeName>
            <fullName evidence="1">AICAR transformylase</fullName>
        </alternativeName>
    </domain>
    <domain>
        <recommendedName>
            <fullName evidence="1">IMP cyclohydrolase</fullName>
            <ecNumber evidence="1">3.5.4.10</ecNumber>
        </recommendedName>
        <alternativeName>
            <fullName evidence="1">ATIC</fullName>
        </alternativeName>
        <alternativeName>
            <fullName evidence="1">IMP synthase</fullName>
        </alternativeName>
        <alternativeName>
            <fullName evidence="1">Inosinicase</fullName>
        </alternativeName>
    </domain>
</protein>
<reference key="1">
    <citation type="journal article" date="2001" name="J. Bacteriol.">
        <title>Genome sequence and comparative analysis of the solvent-producing bacterium Clostridium acetobutylicum.</title>
        <authorList>
            <person name="Noelling J."/>
            <person name="Breton G."/>
            <person name="Omelchenko M.V."/>
            <person name="Makarova K.S."/>
            <person name="Zeng Q."/>
            <person name="Gibson R."/>
            <person name="Lee H.M."/>
            <person name="Dubois J."/>
            <person name="Qiu D."/>
            <person name="Hitti J."/>
            <person name="Wolf Y.I."/>
            <person name="Tatusov R.L."/>
            <person name="Sabathe F."/>
            <person name="Doucette-Stamm L.A."/>
            <person name="Soucaille P."/>
            <person name="Daly M.J."/>
            <person name="Bennett G.N."/>
            <person name="Koonin E.V."/>
            <person name="Smith D.R."/>
        </authorList>
    </citation>
    <scope>NUCLEOTIDE SEQUENCE [LARGE SCALE GENOMIC DNA]</scope>
    <source>
        <strain>ATCC 824 / DSM 792 / JCM 1419 / IAM 19013 / LMG 5710 / NBRC 13948 / NRRL B-527 / VKM B-1787 / 2291 / W</strain>
    </source>
</reference>
<proteinExistence type="inferred from homology"/>
<keyword id="KW-0378">Hydrolase</keyword>
<keyword id="KW-0511">Multifunctional enzyme</keyword>
<keyword id="KW-0658">Purine biosynthesis</keyword>
<keyword id="KW-1185">Reference proteome</keyword>
<keyword id="KW-0808">Transferase</keyword>
<name>PUR9_CLOAB</name>
<organism>
    <name type="scientific">Clostridium acetobutylicum (strain ATCC 824 / DSM 792 / JCM 1419 / IAM 19013 / LMG 5710 / NBRC 13948 / NRRL B-527 / VKM B-1787 / 2291 / W)</name>
    <dbReference type="NCBI Taxonomy" id="272562"/>
    <lineage>
        <taxon>Bacteria</taxon>
        <taxon>Bacillati</taxon>
        <taxon>Bacillota</taxon>
        <taxon>Clostridia</taxon>
        <taxon>Eubacteriales</taxon>
        <taxon>Clostridiaceae</taxon>
        <taxon>Clostridium</taxon>
    </lineage>
</organism>
<sequence length="499" mass="55238">MIKRALISVFNKNGILKLAKFLNEKGVEILSTGGTYKHLKENGIPVIEVSEVTGFDEILDGRVKTLHPKIHGGILAIRDNKEHMDTIKNKGITPIDMVVVNLYPFFDKVKENISFEEKVEFIDIGGPTMIRAAAKNFQDVVVLTDVNDYDDVIDQIEKTGEVAYNTKKRLAGKVFNLMSAYDGAISRFLLEDEYPEYLAVPYKKKMDLRYGENPHQTAAFYEAAFGDGAMKGFEQLNGKELSYNNIKDMDIAWKVVNEFDETVCCALKHNSPCGVAIGENPLDAYKKAFECDDTSIFGGIVALNKVIDKPAAEEMVKIFLEIVIAPDFTADALEVLKSKKNLRVIKANEKPSDNFELAKVDGAMLVQSADNKLTEKMEVVTDKKPTDEEMRDMIFGMKVVKYVKSNAIVVVKNGAAVGIGGGQVNRIWPAKDAMERGKGAAVLASDAFFPFGDIVEEAHKNGIKAIIQPGGSIRDQESIDGCNKYGISMVMTGIRHFKH</sequence>
<dbReference type="EC" id="2.1.2.3" evidence="1"/>
<dbReference type="EC" id="3.5.4.10" evidence="1"/>
<dbReference type="EMBL" id="AE001437">
    <property type="protein sequence ID" value="AAK79363.1"/>
    <property type="molecule type" value="Genomic_DNA"/>
</dbReference>
<dbReference type="PIR" id="H97071">
    <property type="entry name" value="H97071"/>
</dbReference>
<dbReference type="RefSeq" id="NP_348023.1">
    <property type="nucleotide sequence ID" value="NC_003030.1"/>
</dbReference>
<dbReference type="RefSeq" id="WP_010964704.1">
    <property type="nucleotide sequence ID" value="NC_003030.1"/>
</dbReference>
<dbReference type="SMR" id="Q97J91"/>
<dbReference type="STRING" id="272562.CA_C1395"/>
<dbReference type="GeneID" id="44997901"/>
<dbReference type="KEGG" id="cac:CA_C1395"/>
<dbReference type="PATRIC" id="fig|272562.8.peg.1601"/>
<dbReference type="eggNOG" id="COG0138">
    <property type="taxonomic scope" value="Bacteria"/>
</dbReference>
<dbReference type="HOGENOM" id="CLU_016316_5_2_9"/>
<dbReference type="OrthoDB" id="9802065at2"/>
<dbReference type="UniPathway" id="UPA00074">
    <property type="reaction ID" value="UER00133"/>
</dbReference>
<dbReference type="UniPathway" id="UPA00074">
    <property type="reaction ID" value="UER00135"/>
</dbReference>
<dbReference type="Proteomes" id="UP000000814">
    <property type="component" value="Chromosome"/>
</dbReference>
<dbReference type="GO" id="GO:0005829">
    <property type="term" value="C:cytosol"/>
    <property type="evidence" value="ECO:0007669"/>
    <property type="project" value="TreeGrafter"/>
</dbReference>
<dbReference type="GO" id="GO:0003937">
    <property type="term" value="F:IMP cyclohydrolase activity"/>
    <property type="evidence" value="ECO:0007669"/>
    <property type="project" value="UniProtKB-UniRule"/>
</dbReference>
<dbReference type="GO" id="GO:0004643">
    <property type="term" value="F:phosphoribosylaminoimidazolecarboxamide formyltransferase activity"/>
    <property type="evidence" value="ECO:0007669"/>
    <property type="project" value="UniProtKB-UniRule"/>
</dbReference>
<dbReference type="GO" id="GO:0006189">
    <property type="term" value="P:'de novo' IMP biosynthetic process"/>
    <property type="evidence" value="ECO:0007669"/>
    <property type="project" value="UniProtKB-UniRule"/>
</dbReference>
<dbReference type="CDD" id="cd01421">
    <property type="entry name" value="IMPCH"/>
    <property type="match status" value="1"/>
</dbReference>
<dbReference type="FunFam" id="3.40.140.20:FF:000001">
    <property type="entry name" value="Bifunctional purine biosynthesis protein PurH"/>
    <property type="match status" value="1"/>
</dbReference>
<dbReference type="FunFam" id="3.40.140.20:FF:000002">
    <property type="entry name" value="Bifunctional purine biosynthesis protein PurH"/>
    <property type="match status" value="1"/>
</dbReference>
<dbReference type="FunFam" id="3.40.50.1380:FF:000001">
    <property type="entry name" value="Bifunctional purine biosynthesis protein PurH"/>
    <property type="match status" value="1"/>
</dbReference>
<dbReference type="Gene3D" id="3.40.140.20">
    <property type="match status" value="2"/>
</dbReference>
<dbReference type="Gene3D" id="3.40.50.1380">
    <property type="entry name" value="Methylglyoxal synthase-like domain"/>
    <property type="match status" value="1"/>
</dbReference>
<dbReference type="HAMAP" id="MF_00139">
    <property type="entry name" value="PurH"/>
    <property type="match status" value="1"/>
</dbReference>
<dbReference type="InterPro" id="IPR024051">
    <property type="entry name" value="AICAR_Tfase_dup_dom_sf"/>
</dbReference>
<dbReference type="InterPro" id="IPR016193">
    <property type="entry name" value="Cytidine_deaminase-like"/>
</dbReference>
<dbReference type="InterPro" id="IPR011607">
    <property type="entry name" value="MGS-like_dom"/>
</dbReference>
<dbReference type="InterPro" id="IPR036914">
    <property type="entry name" value="MGS-like_dom_sf"/>
</dbReference>
<dbReference type="InterPro" id="IPR002695">
    <property type="entry name" value="PurH-like"/>
</dbReference>
<dbReference type="NCBIfam" id="NF002049">
    <property type="entry name" value="PRK00881.1"/>
    <property type="match status" value="1"/>
</dbReference>
<dbReference type="NCBIfam" id="TIGR00355">
    <property type="entry name" value="purH"/>
    <property type="match status" value="1"/>
</dbReference>
<dbReference type="PANTHER" id="PTHR11692:SF0">
    <property type="entry name" value="BIFUNCTIONAL PURINE BIOSYNTHESIS PROTEIN ATIC"/>
    <property type="match status" value="1"/>
</dbReference>
<dbReference type="PANTHER" id="PTHR11692">
    <property type="entry name" value="BIFUNCTIONAL PURINE BIOSYNTHESIS PROTEIN PURH"/>
    <property type="match status" value="1"/>
</dbReference>
<dbReference type="Pfam" id="PF01808">
    <property type="entry name" value="AICARFT_IMPCHas"/>
    <property type="match status" value="1"/>
</dbReference>
<dbReference type="Pfam" id="PF02142">
    <property type="entry name" value="MGS"/>
    <property type="match status" value="1"/>
</dbReference>
<dbReference type="PIRSF" id="PIRSF000414">
    <property type="entry name" value="AICARFT_IMPCHas"/>
    <property type="match status" value="1"/>
</dbReference>
<dbReference type="SMART" id="SM00798">
    <property type="entry name" value="AICARFT_IMPCHas"/>
    <property type="match status" value="1"/>
</dbReference>
<dbReference type="SMART" id="SM00851">
    <property type="entry name" value="MGS"/>
    <property type="match status" value="1"/>
</dbReference>
<dbReference type="SUPFAM" id="SSF53927">
    <property type="entry name" value="Cytidine deaminase-like"/>
    <property type="match status" value="1"/>
</dbReference>
<dbReference type="SUPFAM" id="SSF52335">
    <property type="entry name" value="Methylglyoxal synthase-like"/>
    <property type="match status" value="1"/>
</dbReference>
<dbReference type="PROSITE" id="PS51855">
    <property type="entry name" value="MGS"/>
    <property type="match status" value="1"/>
</dbReference>
<gene>
    <name evidence="1" type="primary">purH</name>
    <name type="ordered locus">CA_C1395</name>
</gene>
<accession>Q97J91</accession>
<evidence type="ECO:0000255" key="1">
    <source>
        <dbReference type="HAMAP-Rule" id="MF_00139"/>
    </source>
</evidence>
<evidence type="ECO:0000255" key="2">
    <source>
        <dbReference type="PROSITE-ProRule" id="PRU01202"/>
    </source>
</evidence>
<comment type="catalytic activity">
    <reaction evidence="1">
        <text>(6R)-10-formyltetrahydrofolate + 5-amino-1-(5-phospho-beta-D-ribosyl)imidazole-4-carboxamide = 5-formamido-1-(5-phospho-D-ribosyl)imidazole-4-carboxamide + (6S)-5,6,7,8-tetrahydrofolate</text>
        <dbReference type="Rhea" id="RHEA:22192"/>
        <dbReference type="ChEBI" id="CHEBI:57453"/>
        <dbReference type="ChEBI" id="CHEBI:58467"/>
        <dbReference type="ChEBI" id="CHEBI:58475"/>
        <dbReference type="ChEBI" id="CHEBI:195366"/>
        <dbReference type="EC" id="2.1.2.3"/>
    </reaction>
</comment>
<comment type="catalytic activity">
    <reaction evidence="1">
        <text>IMP + H2O = 5-formamido-1-(5-phospho-D-ribosyl)imidazole-4-carboxamide</text>
        <dbReference type="Rhea" id="RHEA:18445"/>
        <dbReference type="ChEBI" id="CHEBI:15377"/>
        <dbReference type="ChEBI" id="CHEBI:58053"/>
        <dbReference type="ChEBI" id="CHEBI:58467"/>
        <dbReference type="EC" id="3.5.4.10"/>
    </reaction>
</comment>
<comment type="pathway">
    <text evidence="1">Purine metabolism; IMP biosynthesis via de novo pathway; 5-formamido-1-(5-phospho-D-ribosyl)imidazole-4-carboxamide from 5-amino-1-(5-phospho-D-ribosyl)imidazole-4-carboxamide (10-formyl THF route): step 1/1.</text>
</comment>
<comment type="pathway">
    <text evidence="1">Purine metabolism; IMP biosynthesis via de novo pathway; IMP from 5-formamido-1-(5-phospho-D-ribosyl)imidazole-4-carboxamide: step 1/1.</text>
</comment>
<comment type="domain">
    <text evidence="1">The IMP cyclohydrolase activity resides in the N-terminal region.</text>
</comment>
<comment type="similarity">
    <text evidence="1">Belongs to the PurH family.</text>
</comment>
<feature type="chain" id="PRO_0000192084" description="Bifunctional purine biosynthesis protein PurH">
    <location>
        <begin position="1"/>
        <end position="499"/>
    </location>
</feature>
<feature type="domain" description="MGS-like" evidence="2">
    <location>
        <begin position="1"/>
        <end position="144"/>
    </location>
</feature>